<keyword id="KW-1185">Reference proteome</keyword>
<keyword id="KW-0687">Ribonucleoprotein</keyword>
<keyword id="KW-0689">Ribosomal protein</keyword>
<keyword id="KW-0694">RNA-binding</keyword>
<keyword id="KW-0699">rRNA-binding</keyword>
<reference key="1">
    <citation type="journal article" date="2009" name="PLoS ONE">
        <title>Complete genome sequence of the aerobic CO-oxidizing thermophile Thermomicrobium roseum.</title>
        <authorList>
            <person name="Wu D."/>
            <person name="Raymond J."/>
            <person name="Wu M."/>
            <person name="Chatterji S."/>
            <person name="Ren Q."/>
            <person name="Graham J.E."/>
            <person name="Bryant D.A."/>
            <person name="Robb F."/>
            <person name="Colman A."/>
            <person name="Tallon L.J."/>
            <person name="Badger J.H."/>
            <person name="Madupu R."/>
            <person name="Ward N.L."/>
            <person name="Eisen J.A."/>
        </authorList>
    </citation>
    <scope>NUCLEOTIDE SEQUENCE [LARGE SCALE GENOMIC DNA]</scope>
    <source>
        <strain>ATCC 27502 / DSM 5159 / P-2</strain>
    </source>
</reference>
<sequence>MGRKVNPIGFRLGIVHDWESKWFAEKDRQYREQLHEDLDIRELVHRELPRAGISRIEIQRAVNRVDVTIHTAKPGVVIGKQGANVERLRQLLESRIGKKVHLNIQEIRKPELDARLVAESIAEQITRRVSYRRAMKHAAAAAMRAGAKGVKIRVKGRLGGAEMKRMVWEIVGRVPLNTIRANIDYAVVHAPTIYGQIGVKVWIYHGDVLPEARPPIAAGVVAE</sequence>
<comment type="function">
    <text evidence="1">Binds the lower part of the 30S subunit head. Binds mRNA in the 70S ribosome, positioning it for translation.</text>
</comment>
<comment type="subunit">
    <text evidence="1">Part of the 30S ribosomal subunit. Forms a tight complex with proteins S10 and S14.</text>
</comment>
<comment type="similarity">
    <text evidence="1">Belongs to the universal ribosomal protein uS3 family.</text>
</comment>
<accession>B9KZY1</accession>
<organism>
    <name type="scientific">Thermomicrobium roseum (strain ATCC 27502 / DSM 5159 / P-2)</name>
    <dbReference type="NCBI Taxonomy" id="309801"/>
    <lineage>
        <taxon>Bacteria</taxon>
        <taxon>Pseudomonadati</taxon>
        <taxon>Thermomicrobiota</taxon>
        <taxon>Thermomicrobia</taxon>
        <taxon>Thermomicrobiales</taxon>
        <taxon>Thermomicrobiaceae</taxon>
        <taxon>Thermomicrobium</taxon>
    </lineage>
</organism>
<proteinExistence type="inferred from homology"/>
<evidence type="ECO:0000255" key="1">
    <source>
        <dbReference type="HAMAP-Rule" id="MF_01309"/>
    </source>
</evidence>
<evidence type="ECO:0000305" key="2"/>
<feature type="chain" id="PRO_1000165520" description="Small ribosomal subunit protein uS3">
    <location>
        <begin position="1"/>
        <end position="223"/>
    </location>
</feature>
<feature type="domain" description="KH type-2" evidence="1">
    <location>
        <begin position="40"/>
        <end position="108"/>
    </location>
</feature>
<dbReference type="EMBL" id="CP001275">
    <property type="protein sequence ID" value="ACM05831.1"/>
    <property type="molecule type" value="Genomic_DNA"/>
</dbReference>
<dbReference type="RefSeq" id="WP_015921942.1">
    <property type="nucleotide sequence ID" value="NC_011959.1"/>
</dbReference>
<dbReference type="SMR" id="B9KZY1"/>
<dbReference type="STRING" id="309801.trd_0978"/>
<dbReference type="KEGG" id="tro:trd_0978"/>
<dbReference type="eggNOG" id="COG0092">
    <property type="taxonomic scope" value="Bacteria"/>
</dbReference>
<dbReference type="HOGENOM" id="CLU_058591_0_2_0"/>
<dbReference type="OrthoDB" id="9806396at2"/>
<dbReference type="Proteomes" id="UP000000447">
    <property type="component" value="Chromosome"/>
</dbReference>
<dbReference type="GO" id="GO:0022627">
    <property type="term" value="C:cytosolic small ribosomal subunit"/>
    <property type="evidence" value="ECO:0007669"/>
    <property type="project" value="TreeGrafter"/>
</dbReference>
<dbReference type="GO" id="GO:0003729">
    <property type="term" value="F:mRNA binding"/>
    <property type="evidence" value="ECO:0007669"/>
    <property type="project" value="UniProtKB-UniRule"/>
</dbReference>
<dbReference type="GO" id="GO:0019843">
    <property type="term" value="F:rRNA binding"/>
    <property type="evidence" value="ECO:0007669"/>
    <property type="project" value="UniProtKB-UniRule"/>
</dbReference>
<dbReference type="GO" id="GO:0003735">
    <property type="term" value="F:structural constituent of ribosome"/>
    <property type="evidence" value="ECO:0007669"/>
    <property type="project" value="InterPro"/>
</dbReference>
<dbReference type="GO" id="GO:0006412">
    <property type="term" value="P:translation"/>
    <property type="evidence" value="ECO:0007669"/>
    <property type="project" value="UniProtKB-UniRule"/>
</dbReference>
<dbReference type="CDD" id="cd02412">
    <property type="entry name" value="KH-II_30S_S3"/>
    <property type="match status" value="1"/>
</dbReference>
<dbReference type="FunFam" id="3.30.300.20:FF:000001">
    <property type="entry name" value="30S ribosomal protein S3"/>
    <property type="match status" value="1"/>
</dbReference>
<dbReference type="Gene3D" id="3.30.300.20">
    <property type="match status" value="1"/>
</dbReference>
<dbReference type="Gene3D" id="3.30.1140.32">
    <property type="entry name" value="Ribosomal protein S3, C-terminal domain"/>
    <property type="match status" value="1"/>
</dbReference>
<dbReference type="HAMAP" id="MF_01309_B">
    <property type="entry name" value="Ribosomal_uS3_B"/>
    <property type="match status" value="1"/>
</dbReference>
<dbReference type="InterPro" id="IPR004087">
    <property type="entry name" value="KH_dom"/>
</dbReference>
<dbReference type="InterPro" id="IPR015946">
    <property type="entry name" value="KH_dom-like_a/b"/>
</dbReference>
<dbReference type="InterPro" id="IPR004044">
    <property type="entry name" value="KH_dom_type_2"/>
</dbReference>
<dbReference type="InterPro" id="IPR009019">
    <property type="entry name" value="KH_sf_prok-type"/>
</dbReference>
<dbReference type="InterPro" id="IPR036419">
    <property type="entry name" value="Ribosomal_S3_C_sf"/>
</dbReference>
<dbReference type="InterPro" id="IPR005704">
    <property type="entry name" value="Ribosomal_uS3_bac-typ"/>
</dbReference>
<dbReference type="InterPro" id="IPR001351">
    <property type="entry name" value="Ribosomal_uS3_C"/>
</dbReference>
<dbReference type="NCBIfam" id="TIGR01009">
    <property type="entry name" value="rpsC_bact"/>
    <property type="match status" value="1"/>
</dbReference>
<dbReference type="PANTHER" id="PTHR11760">
    <property type="entry name" value="30S/40S RIBOSOMAL PROTEIN S3"/>
    <property type="match status" value="1"/>
</dbReference>
<dbReference type="PANTHER" id="PTHR11760:SF19">
    <property type="entry name" value="SMALL RIBOSOMAL SUBUNIT PROTEIN US3C"/>
    <property type="match status" value="1"/>
</dbReference>
<dbReference type="Pfam" id="PF07650">
    <property type="entry name" value="KH_2"/>
    <property type="match status" value="1"/>
</dbReference>
<dbReference type="Pfam" id="PF00189">
    <property type="entry name" value="Ribosomal_S3_C"/>
    <property type="match status" value="1"/>
</dbReference>
<dbReference type="SMART" id="SM00322">
    <property type="entry name" value="KH"/>
    <property type="match status" value="1"/>
</dbReference>
<dbReference type="SUPFAM" id="SSF54814">
    <property type="entry name" value="Prokaryotic type KH domain (KH-domain type II)"/>
    <property type="match status" value="1"/>
</dbReference>
<dbReference type="SUPFAM" id="SSF54821">
    <property type="entry name" value="Ribosomal protein S3 C-terminal domain"/>
    <property type="match status" value="1"/>
</dbReference>
<dbReference type="PROSITE" id="PS50823">
    <property type="entry name" value="KH_TYPE_2"/>
    <property type="match status" value="1"/>
</dbReference>
<gene>
    <name evidence="1" type="primary">rpsC</name>
    <name type="ordered locus">trd_0978</name>
</gene>
<protein>
    <recommendedName>
        <fullName evidence="1">Small ribosomal subunit protein uS3</fullName>
    </recommendedName>
    <alternativeName>
        <fullName evidence="2">30S ribosomal protein S3</fullName>
    </alternativeName>
</protein>
<name>RS3_THERP</name>